<reference key="1">
    <citation type="submission" date="2006-10" db="EMBL/GenBank/DDBJ databases">
        <title>NISC comparative sequencing initiative.</title>
        <authorList>
            <person name="Antonellis A."/>
            <person name="Ayele K."/>
            <person name="Benjamin B."/>
            <person name="Blakesley R.W."/>
            <person name="Boakye A."/>
            <person name="Bouffard G.G."/>
            <person name="Brinkley C."/>
            <person name="Brooks S."/>
            <person name="Chu G."/>
            <person name="Coleman H."/>
            <person name="Engle J."/>
            <person name="Gestole M."/>
            <person name="Greene A."/>
            <person name="Guan X."/>
            <person name="Gupta J."/>
            <person name="Haghighi P."/>
            <person name="Han J."/>
            <person name="Hansen N."/>
            <person name="Ho S.-L."/>
            <person name="Hu P."/>
            <person name="Hunter G."/>
            <person name="Hurle B."/>
            <person name="Idol J.R."/>
            <person name="Kwong P."/>
            <person name="Laric P."/>
            <person name="Larson S."/>
            <person name="Lee-Lin S.-Q."/>
            <person name="Legaspi R."/>
            <person name="Madden M."/>
            <person name="Maduro Q.L."/>
            <person name="Maduro V.B."/>
            <person name="Margulies E.H."/>
            <person name="Masiello C."/>
            <person name="Maskeri B."/>
            <person name="McDowell J."/>
            <person name="Mojidi H.A."/>
            <person name="Mullikin J.C."/>
            <person name="Oestreicher J.S."/>
            <person name="Park M."/>
            <person name="Portnoy M.E."/>
            <person name="Prasad A."/>
            <person name="Puri O."/>
            <person name="Reddix-Dugue N."/>
            <person name="Schandler K."/>
            <person name="Schueler M.G."/>
            <person name="Sison C."/>
            <person name="Stantripop S."/>
            <person name="Stephen E."/>
            <person name="Taye A."/>
            <person name="Thomas J.W."/>
            <person name="Thomas P.J."/>
            <person name="Tsipouri V."/>
            <person name="Ung L."/>
            <person name="Vogt J.L."/>
            <person name="Wetherby K.D."/>
            <person name="Young A."/>
            <person name="Green E.D."/>
        </authorList>
    </citation>
    <scope>NUCLEOTIDE SEQUENCE [LARGE SCALE GENOMIC DNA]</scope>
</reference>
<organism>
    <name type="scientific">Atelerix albiventris</name>
    <name type="common">Middle-African hedgehog</name>
    <name type="synonym">Four-toed hedgehog</name>
    <dbReference type="NCBI Taxonomy" id="9368"/>
    <lineage>
        <taxon>Eukaryota</taxon>
        <taxon>Metazoa</taxon>
        <taxon>Chordata</taxon>
        <taxon>Craniata</taxon>
        <taxon>Vertebrata</taxon>
        <taxon>Euteleostomi</taxon>
        <taxon>Mammalia</taxon>
        <taxon>Eutheria</taxon>
        <taxon>Laurasiatheria</taxon>
        <taxon>Eulipotyphla</taxon>
        <taxon>Erinaceidae</taxon>
        <taxon>Erinaceinae</taxon>
        <taxon>Atelerix</taxon>
    </lineage>
</organism>
<comment type="function">
    <text evidence="2">Regulates the dendritic spine distribution of CTTN/cortactin in hippocampal neurons, and thus controls dendritic spinogenesis and dendritic spine maintenance. Associates with the striatin-interacting phosphatase and kinase (STRIPAK) core complex to regulate dendritic spine distribution of the STRIPAK complex in hippocampal neurons.</text>
</comment>
<comment type="subunit">
    <text evidence="2">Interacts with CTTN/cortactin SH3 domain. Interacts with STRN, STRN4/zinedin and MOB4/phocein; this interactions mediate the association with the STRIPAK core complex and may regulate dendritic spine distribution of the STRIPAK complex in hippocampal neurons. Activation of glutamate receptors weakens the interaction with STRN and STRN4.</text>
</comment>
<comment type="subcellular location">
    <subcellularLocation>
        <location evidence="1">Cytoplasm</location>
        <location evidence="1">Cell cortex</location>
    </subcellularLocation>
    <subcellularLocation>
        <location evidence="2">Cell projection</location>
        <location evidence="2">Dendritic spine</location>
    </subcellularLocation>
    <text evidence="2">Remains associated with dendritic spines even after glutamate stimulation.</text>
</comment>
<accession>Q00PJ1</accession>
<name>CTTB2_ATEAB</name>
<dbReference type="EMBL" id="DP000003">
    <property type="protein sequence ID" value="AAY88986.1"/>
    <property type="molecule type" value="Genomic_DNA"/>
</dbReference>
<dbReference type="SMR" id="Q00PJ1"/>
<dbReference type="GO" id="GO:0015629">
    <property type="term" value="C:actin cytoskeleton"/>
    <property type="evidence" value="ECO:0007669"/>
    <property type="project" value="TreeGrafter"/>
</dbReference>
<dbReference type="GO" id="GO:0005938">
    <property type="term" value="C:cell cortex"/>
    <property type="evidence" value="ECO:0007669"/>
    <property type="project" value="UniProtKB-SubCell"/>
</dbReference>
<dbReference type="GO" id="GO:0043197">
    <property type="term" value="C:dendritic spine"/>
    <property type="evidence" value="ECO:0000250"/>
    <property type="project" value="UniProtKB"/>
</dbReference>
<dbReference type="GO" id="GO:0090443">
    <property type="term" value="C:FAR/SIN/STRIPAK complex"/>
    <property type="evidence" value="ECO:0000250"/>
    <property type="project" value="UniProtKB"/>
</dbReference>
<dbReference type="GO" id="GO:0051721">
    <property type="term" value="F:protein phosphatase 2A binding"/>
    <property type="evidence" value="ECO:0007669"/>
    <property type="project" value="TreeGrafter"/>
</dbReference>
<dbReference type="CDD" id="cd14686">
    <property type="entry name" value="bZIP"/>
    <property type="match status" value="1"/>
</dbReference>
<dbReference type="Gene3D" id="1.25.40.20">
    <property type="entry name" value="Ankyrin repeat-containing domain"/>
    <property type="match status" value="1"/>
</dbReference>
<dbReference type="InterPro" id="IPR002110">
    <property type="entry name" value="Ankyrin_rpt"/>
</dbReference>
<dbReference type="InterPro" id="IPR036770">
    <property type="entry name" value="Ankyrin_rpt-contain_sf"/>
</dbReference>
<dbReference type="InterPro" id="IPR050719">
    <property type="entry name" value="Cortactin-Actin_Reg"/>
</dbReference>
<dbReference type="InterPro" id="IPR019131">
    <property type="entry name" value="Cortactin-binding_p2_N"/>
</dbReference>
<dbReference type="PANTHER" id="PTHR23166:SF9">
    <property type="entry name" value="CTTNBP2 N-TERMINAL-LIKE PROTEIN"/>
    <property type="match status" value="1"/>
</dbReference>
<dbReference type="PANTHER" id="PTHR23166">
    <property type="entry name" value="FILAMIN/GPBP-INTERACTING PROTEIN"/>
    <property type="match status" value="1"/>
</dbReference>
<dbReference type="Pfam" id="PF25408">
    <property type="entry name" value="AAA_lid_NAV1"/>
    <property type="match status" value="1"/>
</dbReference>
<dbReference type="Pfam" id="PF12796">
    <property type="entry name" value="Ank_2"/>
    <property type="match status" value="2"/>
</dbReference>
<dbReference type="Pfam" id="PF09727">
    <property type="entry name" value="CortBP2"/>
    <property type="match status" value="1"/>
</dbReference>
<dbReference type="SMART" id="SM00248">
    <property type="entry name" value="ANK"/>
    <property type="match status" value="6"/>
</dbReference>
<dbReference type="SUPFAM" id="SSF48403">
    <property type="entry name" value="Ankyrin repeat"/>
    <property type="match status" value="1"/>
</dbReference>
<dbReference type="PROSITE" id="PS50297">
    <property type="entry name" value="ANK_REP_REGION"/>
    <property type="match status" value="1"/>
</dbReference>
<dbReference type="PROSITE" id="PS50088">
    <property type="entry name" value="ANK_REPEAT"/>
    <property type="match status" value="4"/>
</dbReference>
<gene>
    <name type="primary">CTTNBP2</name>
    <name type="synonym">CORTBP2</name>
</gene>
<evidence type="ECO:0000250" key="1">
    <source>
        <dbReference type="UniProtKB" id="B9EJA2"/>
    </source>
</evidence>
<evidence type="ECO:0000250" key="2">
    <source>
        <dbReference type="UniProtKB" id="Q2IBD4"/>
    </source>
</evidence>
<evidence type="ECO:0000250" key="3">
    <source>
        <dbReference type="UniProtKB" id="Q8WZ74"/>
    </source>
</evidence>
<evidence type="ECO:0000255" key="4"/>
<evidence type="ECO:0000256" key="5">
    <source>
        <dbReference type="SAM" id="MobiDB-lite"/>
    </source>
</evidence>
<feature type="chain" id="PRO_0000274182" description="Cortactin-binding protein 2">
    <location>
        <begin position="1"/>
        <end position="1654"/>
    </location>
</feature>
<feature type="repeat" description="ANK 1">
    <location>
        <begin position="710"/>
        <end position="740"/>
    </location>
</feature>
<feature type="repeat" description="ANK 2">
    <location>
        <begin position="744"/>
        <end position="773"/>
    </location>
</feature>
<feature type="repeat" description="ANK 3">
    <location>
        <begin position="777"/>
        <end position="806"/>
    </location>
</feature>
<feature type="repeat" description="ANK 4">
    <location>
        <begin position="810"/>
        <end position="839"/>
    </location>
</feature>
<feature type="repeat" description="ANK 5">
    <location>
        <begin position="843"/>
        <end position="872"/>
    </location>
</feature>
<feature type="repeat" description="ANK 6">
    <location>
        <begin position="913"/>
        <end position="943"/>
    </location>
</feature>
<feature type="region of interest" description="Disordered" evidence="5">
    <location>
        <begin position="1"/>
        <end position="31"/>
    </location>
</feature>
<feature type="region of interest" description="Disordered" evidence="5">
    <location>
        <begin position="361"/>
        <end position="432"/>
    </location>
</feature>
<feature type="region of interest" description="Disordered" evidence="5">
    <location>
        <begin position="455"/>
        <end position="480"/>
    </location>
</feature>
<feature type="region of interest" description="Disordered" evidence="5">
    <location>
        <begin position="495"/>
        <end position="596"/>
    </location>
</feature>
<feature type="region of interest" description="Disordered" evidence="5">
    <location>
        <begin position="1454"/>
        <end position="1478"/>
    </location>
</feature>
<feature type="region of interest" description="Disordered" evidence="5">
    <location>
        <begin position="1556"/>
        <end position="1654"/>
    </location>
</feature>
<feature type="coiled-coil region" evidence="4">
    <location>
        <begin position="119"/>
        <end position="276"/>
    </location>
</feature>
<feature type="compositionally biased region" description="Low complexity" evidence="5">
    <location>
        <begin position="368"/>
        <end position="379"/>
    </location>
</feature>
<feature type="compositionally biased region" description="Polar residues" evidence="5">
    <location>
        <begin position="384"/>
        <end position="395"/>
    </location>
</feature>
<feature type="compositionally biased region" description="Polar residues" evidence="5">
    <location>
        <begin position="411"/>
        <end position="422"/>
    </location>
</feature>
<feature type="compositionally biased region" description="Polar residues" evidence="5">
    <location>
        <begin position="518"/>
        <end position="531"/>
    </location>
</feature>
<feature type="compositionally biased region" description="Polar residues" evidence="5">
    <location>
        <begin position="1581"/>
        <end position="1598"/>
    </location>
</feature>
<feature type="compositionally biased region" description="Low complexity" evidence="5">
    <location>
        <begin position="1623"/>
        <end position="1637"/>
    </location>
</feature>
<feature type="compositionally biased region" description="Basic and acidic residues" evidence="5">
    <location>
        <begin position="1644"/>
        <end position="1654"/>
    </location>
</feature>
<feature type="modified residue" description="Asymmetric dimethylarginine" evidence="1">
    <location>
        <position position="499"/>
    </location>
</feature>
<feature type="modified residue" description="Phosphoserine" evidence="3">
    <location>
        <position position="1523"/>
    </location>
</feature>
<proteinExistence type="inferred from homology"/>
<protein>
    <recommendedName>
        <fullName>Cortactin-binding protein 2</fullName>
        <shortName>CortBP2</shortName>
    </recommendedName>
</protein>
<sequence>MATDGASCEPDFSRSPEDAAGATAEPAKKEFDVDTLSKSELRMLLSVMEGELEARDLVIEALRARRKEVFIQERYGRFNLNDPFLALQRDYEAGAGDKEKKPVCTNPLSILEAVMAHCRKMQERMSTQLAAAESRQKKLEMEKLQLQALEQEHKKLSACLDEERNKNKHVVLMLVKECKQLSGKVIEEAQKLDEVMTKLEEEKKKTTALEEELSAEKQRSTEMEAQMEKQLSEFDTEREQLRAKLHREEAHTADLKEEIDKMKKMIEQLKRGSDSKPGLSLPRKTKDRRLISVSVGTEVSVTKSVACQTDSAIESIEPVKKLPLTVPAKPSTGSPLVSASTKGNMCTNATLVRPGIDRQASHGDLTISSVPAAPTPSASRTEENGPSTGSAPDPTSSTPPLPNNAAPPTVQTPGTAAQSYSQAPPVHSLHSPCANVSLHPGLNPRIQAARFRFQGNANDPDQNGNTSQSPPSRDVSPTSRDNLVAKQLARSTVTQALSRFTSPQTGAPPRPGAAPTGDVSSHTPVSRTSLKTPGVSRVDRGNPPPIPPKKPGLSQTPSPPHPQLKVIMDSSRAASAGVKVDNKTVAVPPSSLPQGNRVISEENLLKSSSPQLPPKPSIDLTVAPAGCAVSALATSQVGAWPAEPPGLNQPACSESSLVIPNTIAFCSSINPVSASSCRTGASVSLLVTASGWSPSLTPLLMSGGPAPLAGRPTLLQQAAAQGNVTLLSMLLNEEGLDINYSCEDGHSALYSAAKNGHTDCVRLLLNAQAQVNAADKNGFTPLCAAAAQGHFKCIELLIANDANINHAADGGQTPLYLACKNGNNECIKLLLGAGSDRSVKTRDGWTPVHAAVDTGNVDNLKLLMYYEAPIPGNSFNEEKLESNIIDLDQEEESPEGIPKTVVPADLINHADREGWTAAHIAASKGFKNCLEILCRHRGLEPERRDKCSRTAHDVATDDCKHLLENLHAFKIPLRISIAEIQPGNHGSDDFECDNIICTLNIRKQTSWDDFSKAVSQALINHFQAVSSDGWWTLEDMTFNNTADSSIGLGASSVQSIMLGNVPWSAGQNFTLFPWEFMRKNKAEQVTVILSGPQEGCLSSVSYTSMIPLQMLQNYLRLVEQYHNVIFHGPEGSLQDYIAHQLALCMKHRQIAAGFTCEIVKAQVHAGFSKEQLVDLFISSACLIPVKQSPVNKKIIIILENLEKSSLSELLGDFLTPLENRSTETPYTLQKGNGMSECYYFHENCFLMGTIAKACLQGSDLLVQQHFRWVQLRWDGEPMQGLLQRFLRRKVVNKFRGQLPSPCDPVCRTVDWALAVWCQLNSCIARLGTPEALLGPKYFLSCPVVPGHAQATVKWMSHLWNAIIAPRVQEAILSRASVKRQHSLGQTTAKKHPSQGQQAIVKAALSILLNKAVLHGCPLQRAELDQHTADFKGGSFPLSMVSSYNSCSRKKAESGAWRKVSTSPRKKSGHFSSPVWNKPDLSEEGIKNKAISQLNYNGSALLAKQKSLENDLSLTLDQRLSLGSDDETDLVKELQNMCSSKSESDISKIADSRDDLRRLHSSGNNPAFSAAVNNPKMPVSQKEVSPLSSHQTTECSNNKSKTELGVSRVRSFLPVPRSKVTQCSQNTKRSSSSSNTRQIEINNNSKEEIWNLRKK</sequence>
<keyword id="KW-0040">ANK repeat</keyword>
<keyword id="KW-0966">Cell projection</keyword>
<keyword id="KW-0175">Coiled coil</keyword>
<keyword id="KW-0963">Cytoplasm</keyword>
<keyword id="KW-0488">Methylation</keyword>
<keyword id="KW-0597">Phosphoprotein</keyword>
<keyword id="KW-0677">Repeat</keyword>
<keyword id="KW-0770">Synapse</keyword>